<gene>
    <name type="primary">HSP83</name>
    <name type="synonym">HSP90</name>
</gene>
<organism>
    <name type="scientific">Leishmania donovani</name>
    <dbReference type="NCBI Taxonomy" id="5661"/>
    <lineage>
        <taxon>Eukaryota</taxon>
        <taxon>Discoba</taxon>
        <taxon>Euglenozoa</taxon>
        <taxon>Kinetoplastea</taxon>
        <taxon>Metakinetoplastina</taxon>
        <taxon>Trypanosomatida</taxon>
        <taxon>Trypanosomatidae</taxon>
        <taxon>Leishmaniinae</taxon>
        <taxon>Leishmania</taxon>
    </lineage>
</organism>
<accession>P27890</accession>
<proteinExistence type="evidence at transcript level"/>
<name>HSP83_LEIDO</name>
<keyword id="KW-0067">ATP-binding</keyword>
<keyword id="KW-0143">Chaperone</keyword>
<keyword id="KW-0963">Cytoplasm</keyword>
<keyword id="KW-0547">Nucleotide-binding</keyword>
<keyword id="KW-0346">Stress response</keyword>
<sequence>TKKVKEVTKEYEVQNKHKPLWTRDPKDVTKEEYAAFYKAISNDWEDPMATKHFSVEGQLEFRSIMFVPKRAPFDMFEPNKKRNNIKLYVRRVFIMDNCEDLCPDWLGFVKGVVDSEDLPLNISRENLQQNKILKVIRKNIVKKCLEMFDEVAENKEDYKQFYEQFGKNIKLGIHEDTANPKKLMEFLRFYSTESGLEMTTLKDYVTRMKEGQKSIYYITGDSKKKLESSPFIEQARRRGLEVLFMTEPIDEYVMQQVKDFEDKKFACLTKEGVHFEESEEEKQQREEEKAACEKRCKTMKEVLGDKVEKVTVSDRLSTSPCILVTSEFGWSAHMEQIMRNQAVRDSSMSAYMMSKKTMELNPRHPIIKVLRRRVEADENDKAVKDLVFLLFDTSLLTSGFQLEDPTGYAKRINRMIKLGLSLDEEEEAAEATVVETAPAEVTVGTSSMEQVD</sequence>
<protein>
    <recommendedName>
        <fullName>Heat shock protein 83</fullName>
        <shortName>HSP 83</shortName>
    </recommendedName>
    <alternativeName>
        <fullName>HSP 90</fullName>
    </alternativeName>
</protein>
<evidence type="ECO:0000250" key="1"/>
<evidence type="ECO:0000305" key="2"/>
<feature type="chain" id="PRO_0000062940" description="Heat shock protein 83">
    <location>
        <begin position="1" status="less than"/>
        <end position="452"/>
    </location>
</feature>
<feature type="short sequence motif" description="TPR repeat-binding">
    <location>
        <begin position="448"/>
        <end position="452"/>
    </location>
</feature>
<feature type="binding site" evidence="1">
    <location>
        <position position="124"/>
    </location>
    <ligand>
        <name>ATP</name>
        <dbReference type="ChEBI" id="CHEBI:30616"/>
    </ligand>
</feature>
<feature type="non-terminal residue">
    <location>
        <position position="1"/>
    </location>
</feature>
<reference key="1">
    <citation type="journal article" date="1992" name="J. Clin. Microbiol.">
        <title>Recombinant Leishmania Hsp90 and Hsp70 are recognized by sera from visceral leishmaniasis patients but not Chagas' disease patients.</title>
        <authorList>
            <person name="de Andrade C.R."/>
            <person name="Kirchhoff L.V."/>
            <person name="Donelson J.E."/>
            <person name="Otsu K."/>
        </authorList>
    </citation>
    <scope>NUCLEOTIDE SEQUENCE [MRNA]</scope>
    <source>
        <strain>Sudan S1</strain>
    </source>
</reference>
<comment type="function">
    <text evidence="1">Molecular chaperone that promotes the maturation, structural maintenance and proper regulation of specific target proteins involved for instance in cell cycle control and signal transduction. Undergoes a functional cycle that is linked to its ATPase activity. This cycle probably induces conformational changes in the client proteins, thereby causing their activation. Interacts dynamically with various co-chaperones that modulate its substrate recognition, ATPase cycle and chaperone function (By similarity).</text>
</comment>
<comment type="subunit">
    <text evidence="1">Homodimer.</text>
</comment>
<comment type="subcellular location">
    <subcellularLocation>
        <location evidence="1">Cytoplasm</location>
    </subcellularLocation>
</comment>
<comment type="domain">
    <text evidence="1">The TPR repeat-binding motif mediates interaction with TPR repeat-containing proteins.</text>
</comment>
<comment type="similarity">
    <text evidence="2">Belongs to the heat shock protein 90 family.</text>
</comment>
<dbReference type="EMBL" id="M73492">
    <property type="protein sequence ID" value="AAA29252.1"/>
    <property type="molecule type" value="mRNA"/>
</dbReference>
<dbReference type="PIR" id="A44888">
    <property type="entry name" value="A44888"/>
</dbReference>
<dbReference type="SMR" id="P27890"/>
<dbReference type="VEuPathDB" id="TriTrypDB:LdBPK_330360.1"/>
<dbReference type="VEuPathDB" id="TriTrypDB:LdCL_330008800"/>
<dbReference type="VEuPathDB" id="TriTrypDB:LDHU3_33.0550"/>
<dbReference type="GO" id="GO:0005737">
    <property type="term" value="C:cytoplasm"/>
    <property type="evidence" value="ECO:0007669"/>
    <property type="project" value="UniProtKB-SubCell"/>
</dbReference>
<dbReference type="GO" id="GO:0005524">
    <property type="term" value="F:ATP binding"/>
    <property type="evidence" value="ECO:0007669"/>
    <property type="project" value="UniProtKB-KW"/>
</dbReference>
<dbReference type="GO" id="GO:0016887">
    <property type="term" value="F:ATP hydrolysis activity"/>
    <property type="evidence" value="ECO:0007669"/>
    <property type="project" value="InterPro"/>
</dbReference>
<dbReference type="GO" id="GO:0140662">
    <property type="term" value="F:ATP-dependent protein folding chaperone"/>
    <property type="evidence" value="ECO:0007669"/>
    <property type="project" value="InterPro"/>
</dbReference>
<dbReference type="GO" id="GO:0051082">
    <property type="term" value="F:unfolded protein binding"/>
    <property type="evidence" value="ECO:0007669"/>
    <property type="project" value="InterPro"/>
</dbReference>
<dbReference type="FunFam" id="1.20.120.790:FF:000001">
    <property type="entry name" value="Heat shock protein 90 alpha"/>
    <property type="match status" value="1"/>
</dbReference>
<dbReference type="FunFam" id="3.30.230.80:FF:000001">
    <property type="entry name" value="Heat shock protein 90 alpha"/>
    <property type="match status" value="1"/>
</dbReference>
<dbReference type="FunFam" id="3.40.50.11260:FF:000001">
    <property type="entry name" value="Heat shock protein 90 alpha"/>
    <property type="match status" value="1"/>
</dbReference>
<dbReference type="Gene3D" id="3.30.230.80">
    <property type="match status" value="1"/>
</dbReference>
<dbReference type="Gene3D" id="3.40.50.11260">
    <property type="match status" value="1"/>
</dbReference>
<dbReference type="Gene3D" id="1.20.120.790">
    <property type="entry name" value="Heat shock protein 90, C-terminal domain"/>
    <property type="match status" value="1"/>
</dbReference>
<dbReference type="InterPro" id="IPR037196">
    <property type="entry name" value="HSP90_C"/>
</dbReference>
<dbReference type="InterPro" id="IPR001404">
    <property type="entry name" value="Hsp90_fam"/>
</dbReference>
<dbReference type="InterPro" id="IPR020568">
    <property type="entry name" value="Ribosomal_Su5_D2-typ_SF"/>
</dbReference>
<dbReference type="NCBIfam" id="NF003555">
    <property type="entry name" value="PRK05218.1"/>
    <property type="match status" value="1"/>
</dbReference>
<dbReference type="PANTHER" id="PTHR11528">
    <property type="entry name" value="HEAT SHOCK PROTEIN 90 FAMILY MEMBER"/>
    <property type="match status" value="1"/>
</dbReference>
<dbReference type="Pfam" id="PF00183">
    <property type="entry name" value="HSP90"/>
    <property type="match status" value="1"/>
</dbReference>
<dbReference type="PIRSF" id="PIRSF002583">
    <property type="entry name" value="Hsp90"/>
    <property type="match status" value="1"/>
</dbReference>
<dbReference type="SUPFAM" id="SSF110942">
    <property type="entry name" value="HSP90 C-terminal domain"/>
    <property type="match status" value="1"/>
</dbReference>
<dbReference type="SUPFAM" id="SSF54211">
    <property type="entry name" value="Ribosomal protein S5 domain 2-like"/>
    <property type="match status" value="1"/>
</dbReference>